<sequence length="487" mass="53127">MTVQTAQIVKNYIGGEWVESISTKMEAVYNPATGEVIAQVPLSTKGDVEQAVLAANEAFKSWSKTAVPKRARILFKYQQLLVDNWEELAKLITIENGKSYNEAYGEVLRGIECVEFAAGAPTLMMGKQLPDIATGIESGMYRYPIGVIGGITPFNFPMMVPCWMFPLAIACGNTFVLKPSERTPLLAARLAELAEEAGLPKGVLNIVNGAHDVVNGLLEHKLVKAISFVGSQPVAEYVYKKGTENLKRVQALAGAKNHSIVLNDANLELATKQIISAAFGSAGERCMAASVVTVEEEIADQLVERLVEEANKIVIGNGLDEDVFLGPVIRDNHKERTIGYIDSGVEQGATLVRDGREDTAVKGAGYFVGPTIFDHVTKEMKIWQDEIFAPVLSIVRVKSLDEAIEIANESRFANGACIYTDSGASVRQFRETIESGMLGVNVGVPAPMAFFPFSGWKDSFYGDLHANGTDGVEFYTRKKMLTSRWEK</sequence>
<dbReference type="EC" id="1.2.1.27" evidence="1"/>
<dbReference type="EMBL" id="CP000485">
    <property type="protein sequence ID" value="ABK85558.1"/>
    <property type="status" value="ALT_INIT"/>
    <property type="molecule type" value="Genomic_DNA"/>
</dbReference>
<dbReference type="RefSeq" id="WP_000218120.1">
    <property type="nucleotide sequence ID" value="NC_008600.1"/>
</dbReference>
<dbReference type="SMR" id="A0REB5"/>
<dbReference type="KEGG" id="btl:BALH_2259"/>
<dbReference type="HOGENOM" id="CLU_005391_1_10_9"/>
<dbReference type="UniPathway" id="UPA00076">
    <property type="reaction ID" value="UER00148"/>
</dbReference>
<dbReference type="GO" id="GO:0018478">
    <property type="term" value="F:malonate-semialdehyde dehydrogenase (acetylating) activity"/>
    <property type="evidence" value="ECO:0007669"/>
    <property type="project" value="UniProtKB-UniRule"/>
</dbReference>
<dbReference type="GO" id="GO:0004491">
    <property type="term" value="F:methylmalonate-semialdehyde dehydrogenase (acylating, NAD) activity"/>
    <property type="evidence" value="ECO:0007669"/>
    <property type="project" value="UniProtKB-UniRule"/>
</dbReference>
<dbReference type="GO" id="GO:0019310">
    <property type="term" value="P:inositol catabolic process"/>
    <property type="evidence" value="ECO:0007669"/>
    <property type="project" value="UniProtKB-UniRule"/>
</dbReference>
<dbReference type="GO" id="GO:0006210">
    <property type="term" value="P:thymine catabolic process"/>
    <property type="evidence" value="ECO:0007669"/>
    <property type="project" value="TreeGrafter"/>
</dbReference>
<dbReference type="GO" id="GO:0006574">
    <property type="term" value="P:valine catabolic process"/>
    <property type="evidence" value="ECO:0007669"/>
    <property type="project" value="TreeGrafter"/>
</dbReference>
<dbReference type="CDD" id="cd07085">
    <property type="entry name" value="ALDH_F6_MMSDH"/>
    <property type="match status" value="1"/>
</dbReference>
<dbReference type="FunFam" id="3.40.309.10:FF:000002">
    <property type="entry name" value="Methylmalonate-semialdehyde dehydrogenase (Acylating)"/>
    <property type="match status" value="1"/>
</dbReference>
<dbReference type="FunFam" id="3.40.605.10:FF:000003">
    <property type="entry name" value="Methylmalonate-semialdehyde dehydrogenase [acylating]"/>
    <property type="match status" value="1"/>
</dbReference>
<dbReference type="Gene3D" id="3.40.605.10">
    <property type="entry name" value="Aldehyde Dehydrogenase, Chain A, domain 1"/>
    <property type="match status" value="1"/>
</dbReference>
<dbReference type="Gene3D" id="3.40.309.10">
    <property type="entry name" value="Aldehyde Dehydrogenase, Chain A, domain 2"/>
    <property type="match status" value="1"/>
</dbReference>
<dbReference type="HAMAP" id="MF_01670">
    <property type="entry name" value="IolA"/>
    <property type="match status" value="1"/>
</dbReference>
<dbReference type="InterPro" id="IPR016161">
    <property type="entry name" value="Ald_DH/histidinol_DH"/>
</dbReference>
<dbReference type="InterPro" id="IPR016163">
    <property type="entry name" value="Ald_DH_C"/>
</dbReference>
<dbReference type="InterPro" id="IPR016160">
    <property type="entry name" value="Ald_DH_CS_CYS"/>
</dbReference>
<dbReference type="InterPro" id="IPR016162">
    <property type="entry name" value="Ald_DH_N"/>
</dbReference>
<dbReference type="InterPro" id="IPR015590">
    <property type="entry name" value="Aldehyde_DH_dom"/>
</dbReference>
<dbReference type="InterPro" id="IPR010061">
    <property type="entry name" value="MeMal-semiAld_DH"/>
</dbReference>
<dbReference type="InterPro" id="IPR023510">
    <property type="entry name" value="MSDH_GmP_bac"/>
</dbReference>
<dbReference type="NCBIfam" id="TIGR01722">
    <property type="entry name" value="MMSDH"/>
    <property type="match status" value="1"/>
</dbReference>
<dbReference type="PANTHER" id="PTHR43866">
    <property type="entry name" value="MALONATE-SEMIALDEHYDE DEHYDROGENASE"/>
    <property type="match status" value="1"/>
</dbReference>
<dbReference type="PANTHER" id="PTHR43866:SF4">
    <property type="entry name" value="MALONATE-SEMIALDEHYDE DEHYDROGENASE"/>
    <property type="match status" value="1"/>
</dbReference>
<dbReference type="Pfam" id="PF00171">
    <property type="entry name" value="Aldedh"/>
    <property type="match status" value="1"/>
</dbReference>
<dbReference type="SUPFAM" id="SSF53720">
    <property type="entry name" value="ALDH-like"/>
    <property type="match status" value="1"/>
</dbReference>
<dbReference type="PROSITE" id="PS00070">
    <property type="entry name" value="ALDEHYDE_DEHYDR_CYS"/>
    <property type="match status" value="1"/>
</dbReference>
<reference key="1">
    <citation type="journal article" date="2007" name="J. Bacteriol.">
        <title>The complete genome sequence of Bacillus thuringiensis Al Hakam.</title>
        <authorList>
            <person name="Challacombe J.F."/>
            <person name="Altherr M.R."/>
            <person name="Xie G."/>
            <person name="Bhotika S.S."/>
            <person name="Brown N."/>
            <person name="Bruce D."/>
            <person name="Campbell C.S."/>
            <person name="Campbell M.L."/>
            <person name="Chen J."/>
            <person name="Chertkov O."/>
            <person name="Cleland C."/>
            <person name="Dimitrijevic M."/>
            <person name="Doggett N.A."/>
            <person name="Fawcett J.J."/>
            <person name="Glavina T."/>
            <person name="Goodwin L.A."/>
            <person name="Green L.D."/>
            <person name="Han C.S."/>
            <person name="Hill K.K."/>
            <person name="Hitchcock P."/>
            <person name="Jackson P.J."/>
            <person name="Keim P."/>
            <person name="Kewalramani A.R."/>
            <person name="Longmire J."/>
            <person name="Lucas S."/>
            <person name="Malfatti S."/>
            <person name="Martinez D."/>
            <person name="McMurry K."/>
            <person name="Meincke L.J."/>
            <person name="Misra M."/>
            <person name="Moseman B.L."/>
            <person name="Mundt M."/>
            <person name="Munk A.C."/>
            <person name="Okinaka R.T."/>
            <person name="Parson-Quintana B."/>
            <person name="Reilly L.P."/>
            <person name="Richardson P."/>
            <person name="Robinson D.L."/>
            <person name="Saunders E."/>
            <person name="Tapia R."/>
            <person name="Tesmer J.G."/>
            <person name="Thayer N."/>
            <person name="Thompson L.S."/>
            <person name="Tice H."/>
            <person name="Ticknor L.O."/>
            <person name="Wills P.L."/>
            <person name="Gilna P."/>
            <person name="Brettin T.S."/>
        </authorList>
    </citation>
    <scope>NUCLEOTIDE SEQUENCE [LARGE SCALE GENOMIC DNA]</scope>
    <source>
        <strain>Al Hakam</strain>
    </source>
</reference>
<comment type="function">
    <text evidence="1">Catalyzes the oxidation of malonate semialdehyde (MSA) and methylmalonate semialdehyde (MMSA) into acetyl-CoA and propanoyl-CoA, respectively. Is involved in a myo-inositol catabolic pathway. Bicarbonate, and not CO2, is the end-product of the enzymatic reaction.</text>
</comment>
<comment type="catalytic activity">
    <reaction evidence="1">
        <text>3-oxopropanoate + NAD(+) + CoA + H2O = hydrogencarbonate + acetyl-CoA + NADH + H(+)</text>
        <dbReference type="Rhea" id="RHEA:76615"/>
        <dbReference type="ChEBI" id="CHEBI:15377"/>
        <dbReference type="ChEBI" id="CHEBI:15378"/>
        <dbReference type="ChEBI" id="CHEBI:17544"/>
        <dbReference type="ChEBI" id="CHEBI:33190"/>
        <dbReference type="ChEBI" id="CHEBI:57287"/>
        <dbReference type="ChEBI" id="CHEBI:57288"/>
        <dbReference type="ChEBI" id="CHEBI:57540"/>
        <dbReference type="ChEBI" id="CHEBI:57945"/>
        <dbReference type="EC" id="1.2.1.27"/>
    </reaction>
    <physiologicalReaction direction="left-to-right" evidence="1">
        <dbReference type="Rhea" id="RHEA:76616"/>
    </physiologicalReaction>
</comment>
<comment type="catalytic activity">
    <reaction evidence="1">
        <text>2-methyl-3-oxopropanoate + NAD(+) + CoA + H2O = propanoyl-CoA + hydrogencarbonate + NADH + H(+)</text>
        <dbReference type="Rhea" id="RHEA:20804"/>
        <dbReference type="ChEBI" id="CHEBI:15377"/>
        <dbReference type="ChEBI" id="CHEBI:15378"/>
        <dbReference type="ChEBI" id="CHEBI:17544"/>
        <dbReference type="ChEBI" id="CHEBI:57287"/>
        <dbReference type="ChEBI" id="CHEBI:57392"/>
        <dbReference type="ChEBI" id="CHEBI:57540"/>
        <dbReference type="ChEBI" id="CHEBI:57700"/>
        <dbReference type="ChEBI" id="CHEBI:57945"/>
        <dbReference type="EC" id="1.2.1.27"/>
    </reaction>
    <physiologicalReaction direction="left-to-right" evidence="1">
        <dbReference type="Rhea" id="RHEA:20805"/>
    </physiologicalReaction>
</comment>
<comment type="pathway">
    <text evidence="1">Polyol metabolism; myo-inositol degradation into acetyl-CoA; acetyl-CoA from myo-inositol: step 7/7.</text>
</comment>
<comment type="subunit">
    <text evidence="1">Homotetramer.</text>
</comment>
<comment type="similarity">
    <text evidence="1">Belongs to the aldehyde dehydrogenase family. IolA subfamily.</text>
</comment>
<comment type="sequence caution" evidence="2">
    <conflict type="erroneous initiation">
        <sequence resource="EMBL-CDS" id="ABK85558"/>
    </conflict>
</comment>
<evidence type="ECO:0000255" key="1">
    <source>
        <dbReference type="HAMAP-Rule" id="MF_01670"/>
    </source>
</evidence>
<evidence type="ECO:0000305" key="2"/>
<accession>A0REB5</accession>
<protein>
    <recommendedName>
        <fullName evidence="1">Malonate-semialdehyde dehydrogenase 2</fullName>
        <shortName evidence="1">MSA dehydrogenase 2</shortName>
        <ecNumber evidence="1">1.2.1.27</ecNumber>
    </recommendedName>
    <alternativeName>
        <fullName evidence="1">Methylmalonate-semialdehyde dehydrogenase 2</fullName>
        <shortName evidence="1">MMSA dehydrogenase 2</shortName>
        <shortName evidence="1">MSDH 2</shortName>
    </alternativeName>
</protein>
<proteinExistence type="inferred from homology"/>
<name>IOLA2_BACAH</name>
<gene>
    <name evidence="1" type="primary">iolA2</name>
    <name type="ordered locus">BALH_2259</name>
</gene>
<organism>
    <name type="scientific">Bacillus thuringiensis (strain Al Hakam)</name>
    <dbReference type="NCBI Taxonomy" id="412694"/>
    <lineage>
        <taxon>Bacteria</taxon>
        <taxon>Bacillati</taxon>
        <taxon>Bacillota</taxon>
        <taxon>Bacilli</taxon>
        <taxon>Bacillales</taxon>
        <taxon>Bacillaceae</taxon>
        <taxon>Bacillus</taxon>
        <taxon>Bacillus cereus group</taxon>
    </lineage>
</organism>
<feature type="chain" id="PRO_0000352334" description="Malonate-semialdehyde dehydrogenase 2">
    <location>
        <begin position="1"/>
        <end position="487"/>
    </location>
</feature>
<feature type="active site" description="Nucleophile" evidence="1">
    <location>
        <position position="286"/>
    </location>
</feature>
<feature type="binding site" evidence="1">
    <location>
        <position position="154"/>
    </location>
    <ligand>
        <name>NAD(+)</name>
        <dbReference type="ChEBI" id="CHEBI:57540"/>
    </ligand>
</feature>
<feature type="binding site" evidence="1">
    <location>
        <position position="178"/>
    </location>
    <ligand>
        <name>NAD(+)</name>
        <dbReference type="ChEBI" id="CHEBI:57540"/>
    </ligand>
</feature>
<feature type="binding site" evidence="1">
    <location>
        <position position="181"/>
    </location>
    <ligand>
        <name>NAD(+)</name>
        <dbReference type="ChEBI" id="CHEBI:57540"/>
    </ligand>
</feature>
<feature type="binding site" evidence="1">
    <location>
        <position position="182"/>
    </location>
    <ligand>
        <name>NAD(+)</name>
        <dbReference type="ChEBI" id="CHEBI:57540"/>
    </ligand>
</feature>
<feature type="binding site" evidence="1">
    <location>
        <position position="231"/>
    </location>
    <ligand>
        <name>NAD(+)</name>
        <dbReference type="ChEBI" id="CHEBI:57540"/>
    </ligand>
</feature>
<feature type="binding site" evidence="1">
    <location>
        <position position="386"/>
    </location>
    <ligand>
        <name>NAD(+)</name>
        <dbReference type="ChEBI" id="CHEBI:57540"/>
    </ligand>
</feature>
<keyword id="KW-0520">NAD</keyword>
<keyword id="KW-0560">Oxidoreductase</keyword>